<sequence length="896" mass="103785">MKKLSTNQIRKIWLDFFISKNHYFLETVSLIPVDDPSLLWINSGVATLKPYFDGRKTPPSPRLTNSQKAIRTNDIENVGVTARHHTMFEMLGNFSIGDYFKKEAIELAWELLTDKKYFDIDKNKLYITVFNEDTEAYNIWKDVIKIDEDHIFRLSRKTNFWDVGQGPCGPNTEIFYDRGEIWDPNKIGPRLISDDIENDRYIEVWNIVFSQFNNDGNNNYVELPRKNIDTGAGLERFASIFQNTPTNFETDIFYPTIKKVEQLTNNQFKYSIDNYFNPNKKQTRINTAFKVIADHIRATVFAISDGVFPGNKDRGYIIRRLIRRSCVFGKELGIKQAFLYKLVDSVIESMKEFYPYLIDKKTLVEQTIKDEEEKFLKTLSKGYDLLENIIKTKNTVSDKDALLLFESYGFPIEQTIEISELSNVTVDVEGFKKLLEQTKQATRNARKDLKAWDKQNELFTKLKVESEFTGWSETSRDNAKVIYMFTDQKQVESITNQEVFVILDKTPFYAEKGGQAADSGIIFNDQMKGFVIDVQQGPTHQNIHRIKVQGTLKVNDLINCRVDEEKRIYTMKNHSGTHMIHYALREVLGTSVMQSGSYNDENGLRMDFTYHRLPTNQELLKAQNLVLEKIKNKIDRQTYFCSLEESVKKHQALAFFTEKYDQIVRVIKFGDFSSELCGGTHVNNTSEIEDFIITGIESKGSGLYRIKCLTSFRAVNEYLNEQFKVYKDQAESIIDKYNQNKDLLKNDQLENIYLQIKNTTINKDNLLVIKNLLDQSKEVNKDYDKKVNDLITANKLLKYKDLTPSLNKDNINEIRLETTDLNIKDLKQLADDLRNKYNDLIVILLSSTNENTFIVVAVSQSLQNKYKAIDIFNNLEGYETKGGGNANLAQGKFVKK</sequence>
<gene>
    <name evidence="1" type="primary">alaS</name>
    <name type="ordered locus">MSC_0178</name>
</gene>
<reference key="1">
    <citation type="journal article" date="2004" name="Genome Res.">
        <title>The genome sequence of Mycoplasma mycoides subsp. mycoides SC type strain PG1T, the causative agent of contagious bovine pleuropneumonia (CBPP).</title>
        <authorList>
            <person name="Westberg J."/>
            <person name="Persson A."/>
            <person name="Holmberg A."/>
            <person name="Goesmann A."/>
            <person name="Lundeberg J."/>
            <person name="Johansson K.-E."/>
            <person name="Pettersson B."/>
            <person name="Uhlen M."/>
        </authorList>
    </citation>
    <scope>NUCLEOTIDE SEQUENCE [LARGE SCALE GENOMIC DNA]</scope>
    <source>
        <strain>CCUG 32753 / NCTC 10114 / PG1</strain>
    </source>
</reference>
<accession>P61704</accession>
<evidence type="ECO:0000255" key="1">
    <source>
        <dbReference type="HAMAP-Rule" id="MF_00036"/>
    </source>
</evidence>
<name>SYA_MYCMS</name>
<comment type="function">
    <text evidence="1">Catalyzes the attachment of alanine to tRNA(Ala) in a two-step reaction: alanine is first activated by ATP to form Ala-AMP and then transferred to the acceptor end of tRNA(Ala). Also edits incorrectly charged Ser-tRNA(Ala) and Gly-tRNA(Ala) via its editing domain.</text>
</comment>
<comment type="catalytic activity">
    <reaction evidence="1">
        <text>tRNA(Ala) + L-alanine + ATP = L-alanyl-tRNA(Ala) + AMP + diphosphate</text>
        <dbReference type="Rhea" id="RHEA:12540"/>
        <dbReference type="Rhea" id="RHEA-COMP:9657"/>
        <dbReference type="Rhea" id="RHEA-COMP:9923"/>
        <dbReference type="ChEBI" id="CHEBI:30616"/>
        <dbReference type="ChEBI" id="CHEBI:33019"/>
        <dbReference type="ChEBI" id="CHEBI:57972"/>
        <dbReference type="ChEBI" id="CHEBI:78442"/>
        <dbReference type="ChEBI" id="CHEBI:78497"/>
        <dbReference type="ChEBI" id="CHEBI:456215"/>
        <dbReference type="EC" id="6.1.1.7"/>
    </reaction>
</comment>
<comment type="cofactor">
    <cofactor evidence="1">
        <name>Zn(2+)</name>
        <dbReference type="ChEBI" id="CHEBI:29105"/>
    </cofactor>
    <text evidence="1">Binds 1 zinc ion per subunit.</text>
</comment>
<comment type="subcellular location">
    <subcellularLocation>
        <location evidence="1">Cytoplasm</location>
    </subcellularLocation>
</comment>
<comment type="domain">
    <text evidence="1">Consists of three domains; the N-terminal catalytic domain, the editing domain and the C-terminal C-Ala domain. The editing domain removes incorrectly charged amino acids, while the C-Ala domain, along with tRNA(Ala), serves as a bridge to cooperatively bring together the editing and aminoacylation centers thus stimulating deacylation of misacylated tRNAs.</text>
</comment>
<comment type="similarity">
    <text evidence="1">Belongs to the class-II aminoacyl-tRNA synthetase family.</text>
</comment>
<organism>
    <name type="scientific">Mycoplasma mycoides subsp. mycoides SC (strain CCUG 32753 / NCTC 10114 / PG1)</name>
    <dbReference type="NCBI Taxonomy" id="272632"/>
    <lineage>
        <taxon>Bacteria</taxon>
        <taxon>Bacillati</taxon>
        <taxon>Mycoplasmatota</taxon>
        <taxon>Mollicutes</taxon>
        <taxon>Mycoplasmataceae</taxon>
        <taxon>Mycoplasma</taxon>
    </lineage>
</organism>
<keyword id="KW-0030">Aminoacyl-tRNA synthetase</keyword>
<keyword id="KW-0067">ATP-binding</keyword>
<keyword id="KW-0963">Cytoplasm</keyword>
<keyword id="KW-0436">Ligase</keyword>
<keyword id="KW-0479">Metal-binding</keyword>
<keyword id="KW-0547">Nucleotide-binding</keyword>
<keyword id="KW-0648">Protein biosynthesis</keyword>
<keyword id="KW-1185">Reference proteome</keyword>
<keyword id="KW-0694">RNA-binding</keyword>
<keyword id="KW-0820">tRNA-binding</keyword>
<keyword id="KW-0862">Zinc</keyword>
<dbReference type="EC" id="6.1.1.7" evidence="1"/>
<dbReference type="EMBL" id="BX293980">
    <property type="protein sequence ID" value="CAE76823.1"/>
    <property type="molecule type" value="Genomic_DNA"/>
</dbReference>
<dbReference type="RefSeq" id="NP_975181.1">
    <property type="nucleotide sequence ID" value="NC_005364.2"/>
</dbReference>
<dbReference type="RefSeq" id="WP_011166380.1">
    <property type="nucleotide sequence ID" value="NC_005364.2"/>
</dbReference>
<dbReference type="SMR" id="P61704"/>
<dbReference type="STRING" id="272632.MSC_0178"/>
<dbReference type="KEGG" id="mmy:MSC_0178"/>
<dbReference type="PATRIC" id="fig|272632.4.peg.189"/>
<dbReference type="eggNOG" id="COG0013">
    <property type="taxonomic scope" value="Bacteria"/>
</dbReference>
<dbReference type="HOGENOM" id="CLU_004485_1_1_14"/>
<dbReference type="Proteomes" id="UP000001016">
    <property type="component" value="Chromosome"/>
</dbReference>
<dbReference type="GO" id="GO:0005829">
    <property type="term" value="C:cytosol"/>
    <property type="evidence" value="ECO:0007669"/>
    <property type="project" value="TreeGrafter"/>
</dbReference>
<dbReference type="GO" id="GO:0004813">
    <property type="term" value="F:alanine-tRNA ligase activity"/>
    <property type="evidence" value="ECO:0007669"/>
    <property type="project" value="UniProtKB-UniRule"/>
</dbReference>
<dbReference type="GO" id="GO:0002161">
    <property type="term" value="F:aminoacyl-tRNA deacylase activity"/>
    <property type="evidence" value="ECO:0007669"/>
    <property type="project" value="TreeGrafter"/>
</dbReference>
<dbReference type="GO" id="GO:0005524">
    <property type="term" value="F:ATP binding"/>
    <property type="evidence" value="ECO:0007669"/>
    <property type="project" value="UniProtKB-UniRule"/>
</dbReference>
<dbReference type="GO" id="GO:0000049">
    <property type="term" value="F:tRNA binding"/>
    <property type="evidence" value="ECO:0007669"/>
    <property type="project" value="UniProtKB-KW"/>
</dbReference>
<dbReference type="GO" id="GO:0008270">
    <property type="term" value="F:zinc ion binding"/>
    <property type="evidence" value="ECO:0007669"/>
    <property type="project" value="UniProtKB-UniRule"/>
</dbReference>
<dbReference type="GO" id="GO:0006419">
    <property type="term" value="P:alanyl-tRNA aminoacylation"/>
    <property type="evidence" value="ECO:0007669"/>
    <property type="project" value="UniProtKB-UniRule"/>
</dbReference>
<dbReference type="CDD" id="cd00673">
    <property type="entry name" value="AlaRS_core"/>
    <property type="match status" value="1"/>
</dbReference>
<dbReference type="FunFam" id="3.30.930.10:FF:000046">
    <property type="entry name" value="Alanine--tRNA ligase"/>
    <property type="match status" value="1"/>
</dbReference>
<dbReference type="FunFam" id="3.30.980.10:FF:000004">
    <property type="entry name" value="Alanine--tRNA ligase, cytoplasmic"/>
    <property type="match status" value="1"/>
</dbReference>
<dbReference type="Gene3D" id="2.40.30.130">
    <property type="match status" value="1"/>
</dbReference>
<dbReference type="Gene3D" id="3.10.310.40">
    <property type="match status" value="1"/>
</dbReference>
<dbReference type="Gene3D" id="3.30.930.10">
    <property type="entry name" value="Bira Bifunctional Protein, Domain 2"/>
    <property type="match status" value="1"/>
</dbReference>
<dbReference type="Gene3D" id="3.30.980.10">
    <property type="entry name" value="Threonyl-trna Synthetase, Chain A, domain 2"/>
    <property type="match status" value="1"/>
</dbReference>
<dbReference type="HAMAP" id="MF_00036_B">
    <property type="entry name" value="Ala_tRNA_synth_B"/>
    <property type="match status" value="1"/>
</dbReference>
<dbReference type="InterPro" id="IPR045864">
    <property type="entry name" value="aa-tRNA-synth_II/BPL/LPL"/>
</dbReference>
<dbReference type="InterPro" id="IPR002318">
    <property type="entry name" value="Ala-tRNA-lgiase_IIc"/>
</dbReference>
<dbReference type="InterPro" id="IPR018162">
    <property type="entry name" value="Ala-tRNA-ligase_IIc_anticod-bd"/>
</dbReference>
<dbReference type="InterPro" id="IPR018165">
    <property type="entry name" value="Ala-tRNA-synth_IIc_core"/>
</dbReference>
<dbReference type="InterPro" id="IPR018164">
    <property type="entry name" value="Ala-tRNA-synth_IIc_N"/>
</dbReference>
<dbReference type="InterPro" id="IPR050058">
    <property type="entry name" value="Ala-tRNA_ligase"/>
</dbReference>
<dbReference type="InterPro" id="IPR023033">
    <property type="entry name" value="Ala_tRNA_ligase_euk/bac"/>
</dbReference>
<dbReference type="InterPro" id="IPR003156">
    <property type="entry name" value="DHHA1_dom"/>
</dbReference>
<dbReference type="InterPro" id="IPR018163">
    <property type="entry name" value="Thr/Ala-tRNA-synth_IIc_edit"/>
</dbReference>
<dbReference type="InterPro" id="IPR009000">
    <property type="entry name" value="Transl_B-barrel_sf"/>
</dbReference>
<dbReference type="InterPro" id="IPR012947">
    <property type="entry name" value="tRNA_SAD"/>
</dbReference>
<dbReference type="NCBIfam" id="TIGR00344">
    <property type="entry name" value="alaS"/>
    <property type="match status" value="1"/>
</dbReference>
<dbReference type="PANTHER" id="PTHR11777:SF9">
    <property type="entry name" value="ALANINE--TRNA LIGASE, CYTOPLASMIC"/>
    <property type="match status" value="1"/>
</dbReference>
<dbReference type="PANTHER" id="PTHR11777">
    <property type="entry name" value="ALANYL-TRNA SYNTHETASE"/>
    <property type="match status" value="1"/>
</dbReference>
<dbReference type="Pfam" id="PF02272">
    <property type="entry name" value="DHHA1"/>
    <property type="match status" value="1"/>
</dbReference>
<dbReference type="Pfam" id="PF01411">
    <property type="entry name" value="tRNA-synt_2c"/>
    <property type="match status" value="1"/>
</dbReference>
<dbReference type="Pfam" id="PF07973">
    <property type="entry name" value="tRNA_SAD"/>
    <property type="match status" value="1"/>
</dbReference>
<dbReference type="PRINTS" id="PR00980">
    <property type="entry name" value="TRNASYNTHALA"/>
</dbReference>
<dbReference type="SMART" id="SM00863">
    <property type="entry name" value="tRNA_SAD"/>
    <property type="match status" value="1"/>
</dbReference>
<dbReference type="SUPFAM" id="SSF55681">
    <property type="entry name" value="Class II aaRS and biotin synthetases"/>
    <property type="match status" value="1"/>
</dbReference>
<dbReference type="SUPFAM" id="SSF101353">
    <property type="entry name" value="Putative anticodon-binding domain of alanyl-tRNA synthetase (AlaRS)"/>
    <property type="match status" value="1"/>
</dbReference>
<dbReference type="SUPFAM" id="SSF55186">
    <property type="entry name" value="ThrRS/AlaRS common domain"/>
    <property type="match status" value="1"/>
</dbReference>
<dbReference type="SUPFAM" id="SSF50447">
    <property type="entry name" value="Translation proteins"/>
    <property type="match status" value="1"/>
</dbReference>
<dbReference type="PROSITE" id="PS50860">
    <property type="entry name" value="AA_TRNA_LIGASE_II_ALA"/>
    <property type="match status" value="1"/>
</dbReference>
<protein>
    <recommendedName>
        <fullName evidence="1">Alanine--tRNA ligase</fullName>
        <ecNumber evidence="1">6.1.1.7</ecNumber>
    </recommendedName>
    <alternativeName>
        <fullName evidence="1">Alanyl-tRNA synthetase</fullName>
        <shortName evidence="1">AlaRS</shortName>
    </alternativeName>
</protein>
<feature type="chain" id="PRO_0000075154" description="Alanine--tRNA ligase">
    <location>
        <begin position="1"/>
        <end position="896"/>
    </location>
</feature>
<feature type="binding site" evidence="1">
    <location>
        <position position="574"/>
    </location>
    <ligand>
        <name>Zn(2+)</name>
        <dbReference type="ChEBI" id="CHEBI:29105"/>
    </ligand>
</feature>
<feature type="binding site" evidence="1">
    <location>
        <position position="578"/>
    </location>
    <ligand>
        <name>Zn(2+)</name>
        <dbReference type="ChEBI" id="CHEBI:29105"/>
    </ligand>
</feature>
<feature type="binding site" evidence="1">
    <location>
        <position position="677"/>
    </location>
    <ligand>
        <name>Zn(2+)</name>
        <dbReference type="ChEBI" id="CHEBI:29105"/>
    </ligand>
</feature>
<feature type="binding site" evidence="1">
    <location>
        <position position="681"/>
    </location>
    <ligand>
        <name>Zn(2+)</name>
        <dbReference type="ChEBI" id="CHEBI:29105"/>
    </ligand>
</feature>
<proteinExistence type="inferred from homology"/>